<protein>
    <recommendedName>
        <fullName>Histone H2B.1, sperm</fullName>
    </recommendedName>
</protein>
<sequence>MPSQKSPTKRSPTKRSPTKRSPQKGGKGGKGAKRGGKAGKRRRGVQVKRRRRRRESYGIYIYKVLKQVHPDTGISSRAMSVMNSFVNDVFERIAAEAGRLTTYNRRSTVSSREVQTAVRLLLPGELAKHAVSEGTKAVTKYTTSR</sequence>
<proteinExistence type="evidence at protein level"/>
<evidence type="ECO:0000250" key="1"/>
<evidence type="ECO:0000256" key="2">
    <source>
        <dbReference type="SAM" id="MobiDB-lite"/>
    </source>
</evidence>
<evidence type="ECO:0000269" key="3">
    <source>
    </source>
</evidence>
<evidence type="ECO:0000305" key="4"/>
<reference key="1">
    <citation type="journal article" date="1977" name="Eur. J. Biochem.">
        <title>The complete amino-acid sequence of histone H2B(1) from sperm of the sea urchin Parechinus angulosus.</title>
        <authorList>
            <person name="Strickland M."/>
            <person name="Strickland W.N."/>
            <person name="Brandt W.F."/>
            <person name="von Holt C."/>
        </authorList>
    </citation>
    <scope>PROTEIN SEQUENCE OF 2-145</scope>
</reference>
<dbReference type="PIR" id="A02618">
    <property type="entry name" value="HSUR2P"/>
</dbReference>
<dbReference type="SMR" id="P02290"/>
<dbReference type="GO" id="GO:0000786">
    <property type="term" value="C:nucleosome"/>
    <property type="evidence" value="ECO:0007669"/>
    <property type="project" value="UniProtKB-KW"/>
</dbReference>
<dbReference type="GO" id="GO:0005634">
    <property type="term" value="C:nucleus"/>
    <property type="evidence" value="ECO:0007669"/>
    <property type="project" value="UniProtKB-SubCell"/>
</dbReference>
<dbReference type="GO" id="GO:0003677">
    <property type="term" value="F:DNA binding"/>
    <property type="evidence" value="ECO:0007669"/>
    <property type="project" value="UniProtKB-KW"/>
</dbReference>
<dbReference type="GO" id="GO:0046982">
    <property type="term" value="F:protein heterodimerization activity"/>
    <property type="evidence" value="ECO:0007669"/>
    <property type="project" value="InterPro"/>
</dbReference>
<dbReference type="GO" id="GO:0030527">
    <property type="term" value="F:structural constituent of chromatin"/>
    <property type="evidence" value="ECO:0007669"/>
    <property type="project" value="InterPro"/>
</dbReference>
<dbReference type="CDD" id="cd22910">
    <property type="entry name" value="HFD_H2B"/>
    <property type="match status" value="1"/>
</dbReference>
<dbReference type="FunFam" id="1.10.20.10:FF:000016">
    <property type="entry name" value="Histone H2B"/>
    <property type="match status" value="1"/>
</dbReference>
<dbReference type="Gene3D" id="1.10.20.10">
    <property type="entry name" value="Histone, subunit A"/>
    <property type="match status" value="1"/>
</dbReference>
<dbReference type="InterPro" id="IPR009072">
    <property type="entry name" value="Histone-fold"/>
</dbReference>
<dbReference type="InterPro" id="IPR007125">
    <property type="entry name" value="Histone_H2A/H2B/H3"/>
</dbReference>
<dbReference type="InterPro" id="IPR000558">
    <property type="entry name" value="Histone_H2B"/>
</dbReference>
<dbReference type="InterPro" id="IPR055333">
    <property type="entry name" value="HISTONE_H2B_site"/>
</dbReference>
<dbReference type="PANTHER" id="PTHR23428">
    <property type="entry name" value="HISTONE H2B"/>
    <property type="match status" value="1"/>
</dbReference>
<dbReference type="Pfam" id="PF00125">
    <property type="entry name" value="Histone"/>
    <property type="match status" value="1"/>
</dbReference>
<dbReference type="PRINTS" id="PR00621">
    <property type="entry name" value="HISTONEH2B"/>
</dbReference>
<dbReference type="SMART" id="SM00427">
    <property type="entry name" value="H2B"/>
    <property type="match status" value="1"/>
</dbReference>
<dbReference type="SUPFAM" id="SSF47113">
    <property type="entry name" value="Histone-fold"/>
    <property type="match status" value="1"/>
</dbReference>
<dbReference type="PROSITE" id="PS00357">
    <property type="entry name" value="HISTONE_H2B"/>
    <property type="match status" value="1"/>
</dbReference>
<name>H2BS1_PARAN</name>
<comment type="function">
    <text>Core component of nucleosome. Nucleosomes wrap and compact DNA into chromatin, limiting DNA accessibility to the cellular machineries which require DNA as a template. Histones thereby play a central role in transcription regulation, DNA repair, DNA replication and chromosomal stability. DNA accessibility is regulated via a complex set of post-translational modifications of histones, also called histone code, and nucleosome remodeling.</text>
</comment>
<comment type="subunit">
    <text>The nucleosome is a histone octamer containing two molecules each of H2A, H2B, H3 and H4 assembled in one H3-H4 heterotetramer and two H2A-H2B heterodimers. The octamer wraps approximately 147 bp of DNA.</text>
</comment>
<comment type="subcellular location">
    <subcellularLocation>
        <location>Nucleus</location>
    </subcellularLocation>
    <subcellularLocation>
        <location>Chromosome</location>
    </subcellularLocation>
</comment>
<comment type="domain">
    <text>Contains 4 SPKK motifs which may interact with the minor groove of A/T-rich DNA sites. Phosphorylation of this motif may regulate DNA binding. This motif is reiterated in both termini of histone H1 and in the C-terminus of plant H2A, but its presence in the N-terminus seems to be unique to sea urchin histones H2B.</text>
</comment>
<comment type="PTM">
    <text evidence="1">Monoubiquitination of Lys-140 gives a specific tag for epigenetic transcriptional activation and is also prerequisite for histone H3 'Lys-4' and 'Lys-79' methylation.</text>
</comment>
<comment type="PTM">
    <text evidence="1">Phosphorylated on SPKK motifs 3 and 4; which may regulate DNA binding. Dephosphorylated during maturation of spermatids to mature sperm and rephosphorylated at fertilization (By similarity).</text>
</comment>
<comment type="PTM">
    <text evidence="1">GlcNAcylation at Ser-132 promotes monoubiquitination of Lys-140. It fluctuates in response to extracellular glucose, and associates with transcribed genes (By similarity).</text>
</comment>
<comment type="similarity">
    <text evidence="4">Belongs to the histone H2B family.</text>
</comment>
<feature type="initiator methionine" description="Removed" evidence="3">
    <location>
        <position position="1"/>
    </location>
</feature>
<feature type="chain" id="PRO_0000071888" description="Histone H2B.1, sperm">
    <location>
        <begin position="2"/>
        <end position="145"/>
    </location>
</feature>
<feature type="region of interest" description="Disordered" evidence="2">
    <location>
        <begin position="1"/>
        <end position="52"/>
    </location>
</feature>
<feature type="short sequence motif" description="SPKK motif 1">
    <location>
        <begin position="6"/>
        <end position="9"/>
    </location>
</feature>
<feature type="short sequence motif" description="SPKK motif 2">
    <location>
        <begin position="11"/>
        <end position="14"/>
    </location>
</feature>
<feature type="short sequence motif" description="SPKK motif 3">
    <location>
        <begin position="16"/>
        <end position="19"/>
    </location>
</feature>
<feature type="short sequence motif" description="SPKK motif 4">
    <location>
        <begin position="21"/>
        <end position="24"/>
    </location>
</feature>
<feature type="compositionally biased region" description="Basic residues" evidence="2">
    <location>
        <begin position="7"/>
        <end position="22"/>
    </location>
</feature>
<feature type="compositionally biased region" description="Basic residues" evidence="2">
    <location>
        <begin position="30"/>
        <end position="52"/>
    </location>
</feature>
<feature type="modified residue" description="Phosphoserine" evidence="1">
    <location>
        <position position="16"/>
    </location>
</feature>
<feature type="modified residue" description="Phosphoserine" evidence="1">
    <location>
        <position position="21"/>
    </location>
</feature>
<feature type="glycosylation site" description="O-linked (GlcNAc) serine" evidence="1">
    <location>
        <position position="132"/>
    </location>
</feature>
<feature type="cross-link" description="Glycyl lysine isopeptide (Lys-Gly) (interchain with G-Cter in ubiquitin)" evidence="1">
    <location>
        <position position="140"/>
    </location>
</feature>
<organism>
    <name type="scientific">Parechinus angulosus</name>
    <name type="common">Angulate sea urchin</name>
    <name type="synonym">Cidaris angulosus</name>
    <dbReference type="NCBI Taxonomy" id="7658"/>
    <lineage>
        <taxon>Eukaryota</taxon>
        <taxon>Metazoa</taxon>
        <taxon>Echinodermata</taxon>
        <taxon>Eleutherozoa</taxon>
        <taxon>Echinozoa</taxon>
        <taxon>Echinoidea</taxon>
        <taxon>Euechinoidea</taxon>
        <taxon>Echinacea</taxon>
        <taxon>Camarodonta</taxon>
        <taxon>Echinidea</taxon>
        <taxon>Echinidae</taxon>
        <taxon>Parechinus</taxon>
    </lineage>
</organism>
<keyword id="KW-0158">Chromosome</keyword>
<keyword id="KW-0903">Direct protein sequencing</keyword>
<keyword id="KW-0238">DNA-binding</keyword>
<keyword id="KW-0325">Glycoprotein</keyword>
<keyword id="KW-1017">Isopeptide bond</keyword>
<keyword id="KW-0544">Nucleosome core</keyword>
<keyword id="KW-0539">Nucleus</keyword>
<keyword id="KW-0597">Phosphoprotein</keyword>
<keyword id="KW-0832">Ubl conjugation</keyword>
<accession>P02290</accession>